<proteinExistence type="inferred from homology"/>
<reference key="1">
    <citation type="journal article" date="2005" name="Nature">
        <title>The map-based sequence of the rice genome.</title>
        <authorList>
            <consortium name="International rice genome sequencing project (IRGSP)"/>
        </authorList>
    </citation>
    <scope>NUCLEOTIDE SEQUENCE [LARGE SCALE GENOMIC DNA]</scope>
    <source>
        <strain>cv. Nipponbare</strain>
    </source>
</reference>
<reference key="2">
    <citation type="journal article" date="2008" name="Nucleic Acids Res.">
        <title>The rice annotation project database (RAP-DB): 2008 update.</title>
        <authorList>
            <consortium name="The rice annotation project (RAP)"/>
        </authorList>
    </citation>
    <scope>GENOME REANNOTATION</scope>
    <source>
        <strain>cv. Nipponbare</strain>
    </source>
</reference>
<reference key="3">
    <citation type="journal article" date="2013" name="Rice">
        <title>Improvement of the Oryza sativa Nipponbare reference genome using next generation sequence and optical map data.</title>
        <authorList>
            <person name="Kawahara Y."/>
            <person name="de la Bastide M."/>
            <person name="Hamilton J.P."/>
            <person name="Kanamori H."/>
            <person name="McCombie W.R."/>
            <person name="Ouyang S."/>
            <person name="Schwartz D.C."/>
            <person name="Tanaka T."/>
            <person name="Wu J."/>
            <person name="Zhou S."/>
            <person name="Childs K.L."/>
            <person name="Davidson R.M."/>
            <person name="Lin H."/>
            <person name="Quesada-Ocampo L."/>
            <person name="Vaillancourt B."/>
            <person name="Sakai H."/>
            <person name="Lee S.S."/>
            <person name="Kim J."/>
            <person name="Numa H."/>
            <person name="Itoh T."/>
            <person name="Buell C.R."/>
            <person name="Matsumoto T."/>
        </authorList>
    </citation>
    <scope>GENOME REANNOTATION</scope>
    <source>
        <strain>cv. Nipponbare</strain>
    </source>
</reference>
<reference key="4">
    <citation type="journal article" date="2004" name="BMC Genomics">
        <title>Formin homology 2 domains occur in multiple contexts in angiosperms.</title>
        <authorList>
            <person name="Cvrckova F."/>
            <person name="Novotny M."/>
            <person name="Pickova D."/>
            <person name="Zarsky V."/>
        </authorList>
    </citation>
    <scope>GENE FAMILY</scope>
    <scope>NOMENCLATURE</scope>
</reference>
<gene>
    <name type="primary">FH7</name>
    <name type="ordered locus">Os02g0794900</name>
    <name type="ordered locus">LOC_Os02g55150/LOC_Os02g55160/LOC_Os02g55170</name>
    <name type="ORF">OJ1695_H09.6</name>
</gene>
<accession>Q6K8Z4</accession>
<accession>Q0DWU4</accession>
<organism>
    <name type="scientific">Oryza sativa subsp. japonica</name>
    <name type="common">Rice</name>
    <dbReference type="NCBI Taxonomy" id="39947"/>
    <lineage>
        <taxon>Eukaryota</taxon>
        <taxon>Viridiplantae</taxon>
        <taxon>Streptophyta</taxon>
        <taxon>Embryophyta</taxon>
        <taxon>Tracheophyta</taxon>
        <taxon>Spermatophyta</taxon>
        <taxon>Magnoliopsida</taxon>
        <taxon>Liliopsida</taxon>
        <taxon>Poales</taxon>
        <taxon>Poaceae</taxon>
        <taxon>BOP clade</taxon>
        <taxon>Oryzoideae</taxon>
        <taxon>Oryzeae</taxon>
        <taxon>Oryzinae</taxon>
        <taxon>Oryza</taxon>
        <taxon>Oryza sativa</taxon>
    </lineage>
</organism>
<sequence>MALFRKFFFKKPPDGLLLITDNIYVFDHCFSMKEMEEDHFEAHIRGVAAHLLDNFGDHSFMISNFGIRDEESPIYHILSEYGMTVLDYPGHYEGCPLLTMEMVHCILKSSESWLSLGQRNFLIMHCEQGCWPILAFMLAALLIYLGQYSDEQKTLDMLYKQSPVELLEMFSPLNPMPSQLRYLRYVSMRNVVPEWPPADRALTLDSVILRMVPDFHGQGGFRPIFRIYGPDPLMPTDQTPKVLFSTPKRSNVVRFYSQADELVKINLQCHVQGDVVLECINLYEDLDREDMVIFSDMDATTSHITTEPVSHQEKQGLGIEEFAKVLDIFNHLDWLDGKKDTSLHIPQRKASSTSQGNIDESPADGSETFFDTKEELDFDSLSGESSSSLVLKLTDDYVMVGCTELQQDPLHSTSAEVPSKIQTIEVAPSRTRPPSVLLSPTKVKMPKTSASSMALPSSTVIPQAPSSPVQPQGLIDSAVQIAPAQSASKSAENSGSQTPVNQEPSPLTVNNSASTASLIALCTPPPLPPPPPTVSLAPVSPILPINTSTSIISVSLRSIMPSPSQPPESSASPLALARNEELVKSQEPSCENLEKFPPEFSRASSVTALSSDSLLSIEKESSSTRTYVPEALPAMPLTSDTRTSLISISTAASPPLPPPLPPPLKPSTVMFPLSYGKEVASTKEKAAPTQPPLPPPPPPIQPTLISNSIYSSTSSVVSAPLKRGQSPAPPPPPPPPPPPPFPVSSFSPPQPPPQPPSAVPGLQASPVPPPPPPPPPPMIPGMKTPPTPPPPPPAAPGQQAPAVPPPPPPPPPPMVPGMQTRPIPPPPPPSQTNSLVSSFPSTSKRIPPPPPPPSQTSSLVSSLPSSRKGNDVAAPRPPPPPPLYSRSSHVTSAPSAPPAPPLPPPKLVGASKPSQEQMITWPPPPPPGPPPKNSSNSLPSKGNVVSSSPPPPPTFSFGAKDRSTARSRSPRSLRPNQSSKRTPLKPLHWVKVSRATQGSLWAETQKSDEASRTPEIDISELESLFSVAMPNMEEKRARQRPSVAAKQEKVLLIDLQRSKNCEIMLRNIKMPLPDLMNSVLALDDSIVDGDQVDYLIKFCPTKEEMELLKGFTGNKENLGKCEQFFLEMMKVPRVESKLRILSFKIKFLTQVADLKNSLNTINSVAEEVRNSVKLKRVMQTILSLGNALNQGTARGSAVGFRLDSLLKLIDIRARNNRMTLMHYLCKVLSDKLPEVLDFNKDLTYLEPASKIQLKELAEEMQAITKGLEKVEQELTTSEKDGPGSEIFYKKLKEFLADAQAEGRSLAFLYSTAGKSADSLAHYFGEDPVRCPFEQVVSTLLSFVKTFERAHAENLRQMELEKKRAQMEAEKEKVKAAAHKEDLLEP</sequence>
<name>FH7_ORYSJ</name>
<comment type="similarity">
    <text evidence="5">Belongs to the formin-like family. Class-II subfamily.</text>
</comment>
<comment type="sequence caution" evidence="5">
    <conflict type="erroneous gene model prediction">
        <sequence resource="EMBL-CDS" id="BAD19266"/>
    </conflict>
</comment>
<comment type="sequence caution" evidence="5">
    <conflict type="erroneous gene model prediction">
        <sequence resource="EMBL-CDS" id="BAF10294"/>
    </conflict>
</comment>
<evidence type="ECO:0000255" key="1">
    <source>
        <dbReference type="PROSITE-ProRule" id="PRU00589"/>
    </source>
</evidence>
<evidence type="ECO:0000255" key="2">
    <source>
        <dbReference type="PROSITE-ProRule" id="PRU00590"/>
    </source>
</evidence>
<evidence type="ECO:0000255" key="3">
    <source>
        <dbReference type="PROSITE-ProRule" id="PRU00774"/>
    </source>
</evidence>
<evidence type="ECO:0000256" key="4">
    <source>
        <dbReference type="SAM" id="MobiDB-lite"/>
    </source>
</evidence>
<evidence type="ECO:0000305" key="5"/>
<feature type="chain" id="PRO_0000319011" description="Formin-like protein 7">
    <location>
        <begin position="1"/>
        <end position="1385"/>
    </location>
</feature>
<feature type="domain" description="Phosphatase tensin-type" evidence="2">
    <location>
        <begin position="9"/>
        <end position="193"/>
    </location>
</feature>
<feature type="domain" description="C2 tensin-type" evidence="1">
    <location>
        <begin position="199"/>
        <end position="358"/>
    </location>
</feature>
<feature type="domain" description="FH2" evidence="3">
    <location>
        <begin position="974"/>
        <end position="1372"/>
    </location>
</feature>
<feature type="region of interest" description="Disordered" evidence="4">
    <location>
        <begin position="345"/>
        <end position="367"/>
    </location>
</feature>
<feature type="region of interest" description="Disordered" evidence="4">
    <location>
        <begin position="427"/>
        <end position="510"/>
    </location>
</feature>
<feature type="region of interest" description="Disordered" evidence="4">
    <location>
        <begin position="649"/>
        <end position="989"/>
    </location>
</feature>
<feature type="region of interest" description="Disordered" evidence="4">
    <location>
        <begin position="1362"/>
        <end position="1385"/>
    </location>
</feature>
<feature type="compositionally biased region" description="Polar residues" evidence="4">
    <location>
        <begin position="349"/>
        <end position="358"/>
    </location>
</feature>
<feature type="compositionally biased region" description="Polar residues" evidence="4">
    <location>
        <begin position="448"/>
        <end position="470"/>
    </location>
</feature>
<feature type="compositionally biased region" description="Polar residues" evidence="4">
    <location>
        <begin position="483"/>
        <end position="510"/>
    </location>
</feature>
<feature type="compositionally biased region" description="Pro residues" evidence="4">
    <location>
        <begin position="654"/>
        <end position="665"/>
    </location>
</feature>
<feature type="compositionally biased region" description="Pro residues" evidence="4">
    <location>
        <begin position="689"/>
        <end position="701"/>
    </location>
</feature>
<feature type="compositionally biased region" description="Low complexity" evidence="4">
    <location>
        <begin position="702"/>
        <end position="718"/>
    </location>
</feature>
<feature type="compositionally biased region" description="Pro residues" evidence="4">
    <location>
        <begin position="727"/>
        <end position="758"/>
    </location>
</feature>
<feature type="compositionally biased region" description="Pro residues" evidence="4">
    <location>
        <begin position="766"/>
        <end position="795"/>
    </location>
</feature>
<feature type="compositionally biased region" description="Pro residues" evidence="4">
    <location>
        <begin position="802"/>
        <end position="815"/>
    </location>
</feature>
<feature type="compositionally biased region" description="Low complexity" evidence="4">
    <location>
        <begin position="855"/>
        <end position="867"/>
    </location>
</feature>
<feature type="compositionally biased region" description="Pro residues" evidence="4">
    <location>
        <begin position="895"/>
        <end position="906"/>
    </location>
</feature>
<feature type="compositionally biased region" description="Pro residues" evidence="4">
    <location>
        <begin position="921"/>
        <end position="932"/>
    </location>
</feature>
<feature type="compositionally biased region" description="Low complexity" evidence="4">
    <location>
        <begin position="933"/>
        <end position="942"/>
    </location>
</feature>
<feature type="active site" description="Phosphocysteine intermediate" evidence="2">
    <location>
        <position position="126"/>
    </location>
</feature>
<protein>
    <recommendedName>
        <fullName>Formin-like protein 7</fullName>
    </recommendedName>
    <alternativeName>
        <fullName>OsFH7</fullName>
    </alternativeName>
</protein>
<dbReference type="EMBL" id="AP004094">
    <property type="protein sequence ID" value="BAD19266.1"/>
    <property type="status" value="ALT_SEQ"/>
    <property type="molecule type" value="Genomic_DNA"/>
</dbReference>
<dbReference type="EMBL" id="AP008208">
    <property type="protein sequence ID" value="BAF10294.2"/>
    <property type="status" value="ALT_SEQ"/>
    <property type="molecule type" value="Genomic_DNA"/>
</dbReference>
<dbReference type="EMBL" id="AP014958">
    <property type="status" value="NOT_ANNOTATED_CDS"/>
    <property type="molecule type" value="Genomic_DNA"/>
</dbReference>
<dbReference type="SMR" id="Q6K8Z4"/>
<dbReference type="FunCoup" id="Q6K8Z4">
    <property type="interactions" value="2"/>
</dbReference>
<dbReference type="STRING" id="39947.Q6K8Z4"/>
<dbReference type="PaxDb" id="39947-Q6K8Z4"/>
<dbReference type="KEGG" id="dosa:Os02g0794900"/>
<dbReference type="eggNOG" id="KOG1922">
    <property type="taxonomic scope" value="Eukaryota"/>
</dbReference>
<dbReference type="HOGENOM" id="CLU_002558_0_1_1"/>
<dbReference type="InParanoid" id="Q6K8Z4"/>
<dbReference type="Proteomes" id="UP000000763">
    <property type="component" value="Chromosome 2"/>
</dbReference>
<dbReference type="Proteomes" id="UP000059680">
    <property type="component" value="Chromosome 2"/>
</dbReference>
<dbReference type="GO" id="GO:0004721">
    <property type="term" value="F:phosphoprotein phosphatase activity"/>
    <property type="evidence" value="ECO:0007669"/>
    <property type="project" value="UniProtKB-KW"/>
</dbReference>
<dbReference type="Gene3D" id="2.60.40.1110">
    <property type="match status" value="1"/>
</dbReference>
<dbReference type="Gene3D" id="1.20.58.2220">
    <property type="entry name" value="Formin, FH2 domain"/>
    <property type="match status" value="1"/>
</dbReference>
<dbReference type="Gene3D" id="3.90.190.10">
    <property type="entry name" value="Protein tyrosine phosphatase superfamily"/>
    <property type="match status" value="1"/>
</dbReference>
<dbReference type="InterPro" id="IPR015425">
    <property type="entry name" value="FH2_Formin"/>
</dbReference>
<dbReference type="InterPro" id="IPR042201">
    <property type="entry name" value="FH2_Formin_sf"/>
</dbReference>
<dbReference type="InterPro" id="IPR051144">
    <property type="entry name" value="Formin_homology_domain"/>
</dbReference>
<dbReference type="InterPro" id="IPR029021">
    <property type="entry name" value="Prot-tyrosine_phosphatase-like"/>
</dbReference>
<dbReference type="InterPro" id="IPR014020">
    <property type="entry name" value="Tensin_C2-dom"/>
</dbReference>
<dbReference type="PANTHER" id="PTHR45733">
    <property type="entry name" value="FORMIN-J"/>
    <property type="match status" value="1"/>
</dbReference>
<dbReference type="PANTHER" id="PTHR45733:SF5">
    <property type="entry name" value="FORMIN-LIKE PROTEIN 7"/>
    <property type="match status" value="1"/>
</dbReference>
<dbReference type="Pfam" id="PF02181">
    <property type="entry name" value="FH2"/>
    <property type="match status" value="1"/>
</dbReference>
<dbReference type="Pfam" id="PF10409">
    <property type="entry name" value="PTEN_C2"/>
    <property type="match status" value="1"/>
</dbReference>
<dbReference type="SMART" id="SM00498">
    <property type="entry name" value="FH2"/>
    <property type="match status" value="1"/>
</dbReference>
<dbReference type="SMART" id="SM01326">
    <property type="entry name" value="PTEN_C2"/>
    <property type="match status" value="1"/>
</dbReference>
<dbReference type="SUPFAM" id="SSF52799">
    <property type="entry name" value="(Phosphotyrosine protein) phosphatases II"/>
    <property type="match status" value="1"/>
</dbReference>
<dbReference type="SUPFAM" id="SSF101447">
    <property type="entry name" value="Formin homology 2 domain (FH2 domain)"/>
    <property type="match status" value="1"/>
</dbReference>
<dbReference type="PROSITE" id="PS51182">
    <property type="entry name" value="C2_TENSIN"/>
    <property type="match status" value="1"/>
</dbReference>
<dbReference type="PROSITE" id="PS51444">
    <property type="entry name" value="FH2"/>
    <property type="match status" value="1"/>
</dbReference>
<dbReference type="PROSITE" id="PS51181">
    <property type="entry name" value="PPASE_TENSIN"/>
    <property type="match status" value="1"/>
</dbReference>
<keyword id="KW-0378">Hydrolase</keyword>
<keyword id="KW-0904">Protein phosphatase</keyword>
<keyword id="KW-1185">Reference proteome</keyword>